<name>CCNB_DROME</name>
<dbReference type="EMBL" id="M33192">
    <property type="protein sequence ID" value="AAA28436.1"/>
    <property type="molecule type" value="mRNA"/>
</dbReference>
<dbReference type="EMBL" id="X55542">
    <property type="protein sequence ID" value="CAA39148.1"/>
    <property type="molecule type" value="mRNA"/>
</dbReference>
<dbReference type="EMBL" id="AJ006773">
    <property type="protein sequence ID" value="CAA07238.1"/>
    <property type="molecule type" value="Genomic_DNA"/>
</dbReference>
<dbReference type="EMBL" id="AJ006773">
    <property type="protein sequence ID" value="CAA07239.1"/>
    <property type="molecule type" value="Genomic_DNA"/>
</dbReference>
<dbReference type="EMBL" id="AJ006773">
    <property type="protein sequence ID" value="CAA07240.1"/>
    <property type="molecule type" value="Genomic_DNA"/>
</dbReference>
<dbReference type="EMBL" id="AE013599">
    <property type="protein sequence ID" value="AAF46904.1"/>
    <property type="molecule type" value="Genomic_DNA"/>
</dbReference>
<dbReference type="EMBL" id="AE013599">
    <property type="protein sequence ID" value="AAG22197.1"/>
    <property type="molecule type" value="Genomic_DNA"/>
</dbReference>
<dbReference type="EMBL" id="AE013599">
    <property type="protein sequence ID" value="AAM71123.1"/>
    <property type="molecule type" value="Genomic_DNA"/>
</dbReference>
<dbReference type="EMBL" id="AE013599">
    <property type="protein sequence ID" value="AAM71124.1"/>
    <property type="molecule type" value="Genomic_DNA"/>
</dbReference>
<dbReference type="EMBL" id="AY102682">
    <property type="protein sequence ID" value="AAM27511.1"/>
    <property type="molecule type" value="mRNA"/>
</dbReference>
<dbReference type="PIR" id="A35144">
    <property type="entry name" value="A35144"/>
</dbReference>
<dbReference type="RefSeq" id="NP_726244.1">
    <molecule id="P20439-1"/>
    <property type="nucleotide sequence ID" value="NM_166555.3"/>
</dbReference>
<dbReference type="RefSeq" id="NP_726245.2">
    <property type="nucleotide sequence ID" value="NM_166556.3"/>
</dbReference>
<dbReference type="RefSeq" id="NP_726246.1">
    <molecule id="P20439-2"/>
    <property type="nucleotide sequence ID" value="NM_166557.3"/>
</dbReference>
<dbReference type="RefSeq" id="NP_726247.1">
    <molecule id="P20439-3"/>
    <property type="nucleotide sequence ID" value="NM_166558.2"/>
</dbReference>
<dbReference type="SMR" id="P20439"/>
<dbReference type="BioGRID" id="63230">
    <property type="interactions" value="97"/>
</dbReference>
<dbReference type="FunCoup" id="P20439">
    <property type="interactions" value="677"/>
</dbReference>
<dbReference type="IntAct" id="P20439">
    <property type="interactions" value="12"/>
</dbReference>
<dbReference type="MINT" id="P20439"/>
<dbReference type="STRING" id="7227.FBpp0071822"/>
<dbReference type="iPTMnet" id="P20439"/>
<dbReference type="PaxDb" id="7227-FBpp0071822"/>
<dbReference type="DNASU" id="37618"/>
<dbReference type="EnsemblMetazoa" id="FBtr0071911">
    <molecule id="P20439-1"/>
    <property type="protein sequence ID" value="FBpp0071822"/>
    <property type="gene ID" value="FBgn0000405"/>
</dbReference>
<dbReference type="EnsemblMetazoa" id="FBtr0071913">
    <molecule id="P20439-2"/>
    <property type="protein sequence ID" value="FBpp0071824"/>
    <property type="gene ID" value="FBgn0000405"/>
</dbReference>
<dbReference type="EnsemblMetazoa" id="FBtr0071914">
    <molecule id="P20439-3"/>
    <property type="protein sequence ID" value="FBpp0071825"/>
    <property type="gene ID" value="FBgn0000405"/>
</dbReference>
<dbReference type="GeneID" id="37618"/>
<dbReference type="KEGG" id="dme:Dmel_CG3510"/>
<dbReference type="AGR" id="FB:FBgn0000405"/>
<dbReference type="CTD" id="37618"/>
<dbReference type="FlyBase" id="FBgn0000405">
    <property type="gene designation" value="CycB"/>
</dbReference>
<dbReference type="VEuPathDB" id="VectorBase:FBgn0000405"/>
<dbReference type="eggNOG" id="KOG0653">
    <property type="taxonomic scope" value="Eukaryota"/>
</dbReference>
<dbReference type="GeneTree" id="ENSGT00940000168350"/>
<dbReference type="InParanoid" id="P20439"/>
<dbReference type="OMA" id="VSYKMRA"/>
<dbReference type="OrthoDB" id="5590282at2759"/>
<dbReference type="PhylomeDB" id="P20439"/>
<dbReference type="Reactome" id="R-DME-174048">
    <property type="pathway name" value="APC/C:Cdc20 mediated degradation of Cyclin B"/>
</dbReference>
<dbReference type="Reactome" id="R-DME-176408">
    <property type="pathway name" value="Regulation of APC/C activators between G1/S and early anaphase"/>
</dbReference>
<dbReference type="Reactome" id="R-DME-176412">
    <property type="pathway name" value="Phosphorylation of the APC/C"/>
</dbReference>
<dbReference type="Reactome" id="R-DME-176417">
    <property type="pathway name" value="Phosphorylation of Emi1"/>
</dbReference>
<dbReference type="Reactome" id="R-DME-2500257">
    <property type="pathway name" value="Resolution of Sister Chromatid Cohesion"/>
</dbReference>
<dbReference type="Reactome" id="R-DME-2565942">
    <property type="pathway name" value="Regulation of PLK1 Activity at G2/M Transition"/>
</dbReference>
<dbReference type="Reactome" id="R-DME-3301854">
    <property type="pathway name" value="Nuclear Pore Complex (NPC) Disassembly"/>
</dbReference>
<dbReference type="Reactome" id="R-DME-4419969">
    <property type="pathway name" value="Depolymerization of the Nuclear Lamina"/>
</dbReference>
<dbReference type="Reactome" id="R-DME-6804114">
    <property type="pathway name" value="TP53 Regulates Transcription of Genes Involved in G2 Cell Cycle Arrest"/>
</dbReference>
<dbReference type="Reactome" id="R-DME-68875">
    <property type="pathway name" value="Mitotic Prophase"/>
</dbReference>
<dbReference type="Reactome" id="R-DME-69273">
    <property type="pathway name" value="Cyclin A/B1/B2 associated events during G2/M transition"/>
</dbReference>
<dbReference type="Reactome" id="R-DME-69478">
    <property type="pathway name" value="G2/M DNA replication checkpoint"/>
</dbReference>
<dbReference type="Reactome" id="R-DME-75035">
    <property type="pathway name" value="Chk1/Chk2(Cds1) mediated inactivation of Cyclin B:Cdk1 complex"/>
</dbReference>
<dbReference type="Reactome" id="R-DME-8878166">
    <property type="pathway name" value="Transcriptional regulation by RUNX2"/>
</dbReference>
<dbReference type="SignaLink" id="P20439"/>
<dbReference type="BioGRID-ORCS" id="37618">
    <property type="hits" value="0 hits in 3 CRISPR screens"/>
</dbReference>
<dbReference type="CD-CODE" id="2838EF58">
    <property type="entry name" value="Centrosome"/>
</dbReference>
<dbReference type="ChiTaRS" id="CycB">
    <property type="organism name" value="fly"/>
</dbReference>
<dbReference type="GenomeRNAi" id="37618"/>
<dbReference type="PRO" id="PR:P20439"/>
<dbReference type="Proteomes" id="UP000000803">
    <property type="component" value="Chromosome 2R"/>
</dbReference>
<dbReference type="Bgee" id="FBgn0000405">
    <property type="expression patterns" value="Expressed in cleaving embryo and 104 other cell types or tissues"/>
</dbReference>
<dbReference type="ExpressionAtlas" id="P20439">
    <property type="expression patterns" value="baseline and differential"/>
</dbReference>
<dbReference type="GO" id="GO:0000775">
    <property type="term" value="C:chromosome, centromeric region"/>
    <property type="evidence" value="ECO:0000304"/>
    <property type="project" value="FlyBase"/>
</dbReference>
<dbReference type="GO" id="GO:0000307">
    <property type="term" value="C:cyclin-dependent protein kinase holoenzyme complex"/>
    <property type="evidence" value="ECO:0000318"/>
    <property type="project" value="GO_Central"/>
</dbReference>
<dbReference type="GO" id="GO:0005737">
    <property type="term" value="C:cytoplasm"/>
    <property type="evidence" value="ECO:0000318"/>
    <property type="project" value="GO_Central"/>
</dbReference>
<dbReference type="GO" id="GO:0005815">
    <property type="term" value="C:microtubule organizing center"/>
    <property type="evidence" value="ECO:0000318"/>
    <property type="project" value="GO_Central"/>
</dbReference>
<dbReference type="GO" id="GO:0005634">
    <property type="term" value="C:nucleus"/>
    <property type="evidence" value="ECO:0000314"/>
    <property type="project" value="FlyBase"/>
</dbReference>
<dbReference type="GO" id="GO:0051233">
    <property type="term" value="C:spindle midzone"/>
    <property type="evidence" value="ECO:0000314"/>
    <property type="project" value="FlyBase"/>
</dbReference>
<dbReference type="GO" id="GO:0016538">
    <property type="term" value="F:cyclin-dependent protein serine/threonine kinase regulator activity"/>
    <property type="evidence" value="ECO:0000314"/>
    <property type="project" value="FlyBase"/>
</dbReference>
<dbReference type="GO" id="GO:0008608">
    <property type="term" value="P:attachment of spindle microtubules to kinetochore"/>
    <property type="evidence" value="ECO:0000315"/>
    <property type="project" value="FlyBase"/>
</dbReference>
<dbReference type="GO" id="GO:0001700">
    <property type="term" value="P:embryonic development via the syncytial blastoderm"/>
    <property type="evidence" value="ECO:0000304"/>
    <property type="project" value="FlyBase"/>
</dbReference>
<dbReference type="GO" id="GO:0000082">
    <property type="term" value="P:G1/S transition of mitotic cell cycle"/>
    <property type="evidence" value="ECO:0000318"/>
    <property type="project" value="GO_Central"/>
</dbReference>
<dbReference type="GO" id="GO:0000086">
    <property type="term" value="P:G2/M transition of mitotic cell cycle"/>
    <property type="evidence" value="ECO:0000270"/>
    <property type="project" value="FlyBase"/>
</dbReference>
<dbReference type="GO" id="GO:0048134">
    <property type="term" value="P:germ-line cyst formation"/>
    <property type="evidence" value="ECO:0000315"/>
    <property type="project" value="FlyBase"/>
</dbReference>
<dbReference type="GO" id="GO:0061952">
    <property type="term" value="P:midbody abscission"/>
    <property type="evidence" value="ECO:0000315"/>
    <property type="project" value="FlyBase"/>
</dbReference>
<dbReference type="GO" id="GO:0007079">
    <property type="term" value="P:mitotic chromosome movement towards spindle pole"/>
    <property type="evidence" value="ECO:0000315"/>
    <property type="project" value="FlyBase"/>
</dbReference>
<dbReference type="GO" id="GO:0000281">
    <property type="term" value="P:mitotic cytokinesis"/>
    <property type="evidence" value="ECO:0000315"/>
    <property type="project" value="FlyBase"/>
</dbReference>
<dbReference type="GO" id="GO:0048137">
    <property type="term" value="P:spermatocyte division"/>
    <property type="evidence" value="ECO:0000315"/>
    <property type="project" value="FlyBase"/>
</dbReference>
<dbReference type="GO" id="GO:0035186">
    <property type="term" value="P:syncytial blastoderm mitotic cell cycle"/>
    <property type="evidence" value="ECO:0000316"/>
    <property type="project" value="FlyBase"/>
</dbReference>
<dbReference type="CDD" id="cd20507">
    <property type="entry name" value="CYCLIN_CCNB1-like_rpt1"/>
    <property type="match status" value="1"/>
</dbReference>
<dbReference type="CDD" id="cd20509">
    <property type="entry name" value="CYCLIN_CCNB1-like_rpt2"/>
    <property type="match status" value="1"/>
</dbReference>
<dbReference type="FunFam" id="1.10.472.10:FF:000001">
    <property type="entry name" value="G2/mitotic-specific cyclin"/>
    <property type="match status" value="1"/>
</dbReference>
<dbReference type="Gene3D" id="1.10.472.10">
    <property type="entry name" value="Cyclin-like"/>
    <property type="match status" value="2"/>
</dbReference>
<dbReference type="InterPro" id="IPR039361">
    <property type="entry name" value="Cyclin"/>
</dbReference>
<dbReference type="InterPro" id="IPR013763">
    <property type="entry name" value="Cyclin-like_dom"/>
</dbReference>
<dbReference type="InterPro" id="IPR036915">
    <property type="entry name" value="Cyclin-like_sf"/>
</dbReference>
<dbReference type="InterPro" id="IPR046965">
    <property type="entry name" value="Cyclin_A/B-like"/>
</dbReference>
<dbReference type="InterPro" id="IPR004367">
    <property type="entry name" value="Cyclin_C-dom"/>
</dbReference>
<dbReference type="InterPro" id="IPR006671">
    <property type="entry name" value="Cyclin_N"/>
</dbReference>
<dbReference type="InterPro" id="IPR048258">
    <property type="entry name" value="Cyclins_cyclin-box"/>
</dbReference>
<dbReference type="PANTHER" id="PTHR10177">
    <property type="entry name" value="CYCLINS"/>
    <property type="match status" value="1"/>
</dbReference>
<dbReference type="Pfam" id="PF02984">
    <property type="entry name" value="Cyclin_C"/>
    <property type="match status" value="1"/>
</dbReference>
<dbReference type="Pfam" id="PF00134">
    <property type="entry name" value="Cyclin_N"/>
    <property type="match status" value="1"/>
</dbReference>
<dbReference type="PIRSF" id="PIRSF001771">
    <property type="entry name" value="Cyclin_A_B_D_E"/>
    <property type="match status" value="1"/>
</dbReference>
<dbReference type="SMART" id="SM00385">
    <property type="entry name" value="CYCLIN"/>
    <property type="match status" value="2"/>
</dbReference>
<dbReference type="SMART" id="SM01332">
    <property type="entry name" value="Cyclin_C"/>
    <property type="match status" value="1"/>
</dbReference>
<dbReference type="SUPFAM" id="SSF47954">
    <property type="entry name" value="Cyclin-like"/>
    <property type="match status" value="2"/>
</dbReference>
<dbReference type="PROSITE" id="PS00292">
    <property type="entry name" value="CYCLINS"/>
    <property type="match status" value="1"/>
</dbReference>
<evidence type="ECO:0000256" key="1">
    <source>
        <dbReference type="SAM" id="MobiDB-lite"/>
    </source>
</evidence>
<evidence type="ECO:0000269" key="2">
    <source>
    </source>
</evidence>
<evidence type="ECO:0000269" key="3">
    <source>
    </source>
</evidence>
<evidence type="ECO:0000305" key="4"/>
<protein>
    <recommendedName>
        <fullName>G2/mitotic-specific cyclin-B</fullName>
    </recommendedName>
</protein>
<proteinExistence type="evidence at protein level"/>
<gene>
    <name type="primary">CycB</name>
    <name type="ORF">CG3510</name>
</gene>
<accession>P20439</accession>
<accession>Q0E8Y2</accession>
<accession>Q8MME2</accession>
<accession>Q9I7V2</accession>
<accession>Q9TYH6</accession>
<accession>Q9TYH7</accession>
<accession>Q9V3F4</accession>
<keyword id="KW-0025">Alternative splicing</keyword>
<keyword id="KW-0131">Cell cycle</keyword>
<keyword id="KW-0132">Cell division</keyword>
<keyword id="KW-0195">Cyclin</keyword>
<keyword id="KW-0498">Mitosis</keyword>
<keyword id="KW-0597">Phosphoprotein</keyword>
<keyword id="KW-1185">Reference proteome</keyword>
<feature type="chain" id="PRO_0000080385" description="G2/mitotic-specific cyclin-B">
    <location>
        <begin position="1"/>
        <end position="530"/>
    </location>
</feature>
<feature type="region of interest" description="Disordered" evidence="1">
    <location>
        <begin position="76"/>
        <end position="152"/>
    </location>
</feature>
<feature type="compositionally biased region" description="Low complexity" evidence="1">
    <location>
        <begin position="121"/>
        <end position="144"/>
    </location>
</feature>
<feature type="modified residue" description="Phosphoserine" evidence="2 3">
    <location>
        <position position="137"/>
    </location>
</feature>
<feature type="splice variant" id="VSP_021570" description="In isoform C." evidence="4">
    <location>
        <begin position="1"/>
        <end position="30"/>
    </location>
</feature>
<feature type="splice variant" id="VSP_021569" description="In isoform B." evidence="4">
    <original>MVGTTLKMRGDE</original>
    <variation>MAALEK</variation>
    <location>
        <begin position="1"/>
        <end position="12"/>
    </location>
</feature>
<feature type="sequence conflict" description="In Ref. 1; AAA28436." evidence="4" ref="1">
    <original>R</original>
    <variation>G</variation>
    <location>
        <position position="162"/>
    </location>
</feature>
<feature type="sequence conflict" description="In Ref. 2; CAA39148." evidence="4" ref="2">
    <original>D</original>
    <variation>N</variation>
    <location>
        <position position="383"/>
    </location>
</feature>
<feature type="sequence conflict" description="In Ref. 2; CAA39148." evidence="4" ref="2">
    <original>L</original>
    <variation>P</variation>
    <location>
        <position position="515"/>
    </location>
</feature>
<reference key="1">
    <citation type="journal article" date="1990" name="Cell">
        <title>The roles of Drosophila cyclins A and B in mitotic control.</title>
        <authorList>
            <person name="Lehner C.F."/>
            <person name="O'Farrell P.H."/>
        </authorList>
    </citation>
    <scope>NUCLEOTIDE SEQUENCE [MRNA] (ISOFORM A)</scope>
</reference>
<reference key="2">
    <citation type="journal article" date="1990" name="EMBO J.">
        <title>The A- and B-type cyclins of Drosophila are accumulated and destroyed in temporally distinct events that define separable phases of the G2-M transition.</title>
        <authorList>
            <person name="Whitfield W.G.F."/>
            <person name="Gonzalez C."/>
            <person name="Maldonado-Codina G."/>
            <person name="Glover D.M."/>
        </authorList>
    </citation>
    <scope>NUCLEOTIDE SEQUENCE [MRNA] (ISOFORM A)</scope>
</reference>
<reference key="3">
    <citation type="journal article" date="1992" name="Development">
        <title>3' non-translated sequences in Drosophila cyclin B transcripts direct posterior pole accumulation late in oogenesis and peri-nuclear association in syncytial embryos.</title>
        <authorList>
            <person name="Dalby B."/>
            <person name="Glover D.M."/>
        </authorList>
    </citation>
    <scope>NUCLEOTIDE SEQUENCE [GENOMIC DNA]</scope>
    <scope>ALTERNATIVE SPLICING (ISOFORMS A; B AND C)</scope>
</reference>
<reference key="4">
    <citation type="journal article" date="2000" name="Science">
        <title>The genome sequence of Drosophila melanogaster.</title>
        <authorList>
            <person name="Adams M.D."/>
            <person name="Celniker S.E."/>
            <person name="Holt R.A."/>
            <person name="Evans C.A."/>
            <person name="Gocayne J.D."/>
            <person name="Amanatides P.G."/>
            <person name="Scherer S.E."/>
            <person name="Li P.W."/>
            <person name="Hoskins R.A."/>
            <person name="Galle R.F."/>
            <person name="George R.A."/>
            <person name="Lewis S.E."/>
            <person name="Richards S."/>
            <person name="Ashburner M."/>
            <person name="Henderson S.N."/>
            <person name="Sutton G.G."/>
            <person name="Wortman J.R."/>
            <person name="Yandell M.D."/>
            <person name="Zhang Q."/>
            <person name="Chen L.X."/>
            <person name="Brandon R.C."/>
            <person name="Rogers Y.-H.C."/>
            <person name="Blazej R.G."/>
            <person name="Champe M."/>
            <person name="Pfeiffer B.D."/>
            <person name="Wan K.H."/>
            <person name="Doyle C."/>
            <person name="Baxter E.G."/>
            <person name="Helt G."/>
            <person name="Nelson C.R."/>
            <person name="Miklos G.L.G."/>
            <person name="Abril J.F."/>
            <person name="Agbayani A."/>
            <person name="An H.-J."/>
            <person name="Andrews-Pfannkoch C."/>
            <person name="Baldwin D."/>
            <person name="Ballew R.M."/>
            <person name="Basu A."/>
            <person name="Baxendale J."/>
            <person name="Bayraktaroglu L."/>
            <person name="Beasley E.M."/>
            <person name="Beeson K.Y."/>
            <person name="Benos P.V."/>
            <person name="Berman B.P."/>
            <person name="Bhandari D."/>
            <person name="Bolshakov S."/>
            <person name="Borkova D."/>
            <person name="Botchan M.R."/>
            <person name="Bouck J."/>
            <person name="Brokstein P."/>
            <person name="Brottier P."/>
            <person name="Burtis K.C."/>
            <person name="Busam D.A."/>
            <person name="Butler H."/>
            <person name="Cadieu E."/>
            <person name="Center A."/>
            <person name="Chandra I."/>
            <person name="Cherry J.M."/>
            <person name="Cawley S."/>
            <person name="Dahlke C."/>
            <person name="Davenport L.B."/>
            <person name="Davies P."/>
            <person name="de Pablos B."/>
            <person name="Delcher A."/>
            <person name="Deng Z."/>
            <person name="Mays A.D."/>
            <person name="Dew I."/>
            <person name="Dietz S.M."/>
            <person name="Dodson K."/>
            <person name="Doup L.E."/>
            <person name="Downes M."/>
            <person name="Dugan-Rocha S."/>
            <person name="Dunkov B.C."/>
            <person name="Dunn P."/>
            <person name="Durbin K.J."/>
            <person name="Evangelista C.C."/>
            <person name="Ferraz C."/>
            <person name="Ferriera S."/>
            <person name="Fleischmann W."/>
            <person name="Fosler C."/>
            <person name="Gabrielian A.E."/>
            <person name="Garg N.S."/>
            <person name="Gelbart W.M."/>
            <person name="Glasser K."/>
            <person name="Glodek A."/>
            <person name="Gong F."/>
            <person name="Gorrell J.H."/>
            <person name="Gu Z."/>
            <person name="Guan P."/>
            <person name="Harris M."/>
            <person name="Harris N.L."/>
            <person name="Harvey D.A."/>
            <person name="Heiman T.J."/>
            <person name="Hernandez J.R."/>
            <person name="Houck J."/>
            <person name="Hostin D."/>
            <person name="Houston K.A."/>
            <person name="Howland T.J."/>
            <person name="Wei M.-H."/>
            <person name="Ibegwam C."/>
            <person name="Jalali M."/>
            <person name="Kalush F."/>
            <person name="Karpen G.H."/>
            <person name="Ke Z."/>
            <person name="Kennison J.A."/>
            <person name="Ketchum K.A."/>
            <person name="Kimmel B.E."/>
            <person name="Kodira C.D."/>
            <person name="Kraft C.L."/>
            <person name="Kravitz S."/>
            <person name="Kulp D."/>
            <person name="Lai Z."/>
            <person name="Lasko P."/>
            <person name="Lei Y."/>
            <person name="Levitsky A.A."/>
            <person name="Li J.H."/>
            <person name="Li Z."/>
            <person name="Liang Y."/>
            <person name="Lin X."/>
            <person name="Liu X."/>
            <person name="Mattei B."/>
            <person name="McIntosh T.C."/>
            <person name="McLeod M.P."/>
            <person name="McPherson D."/>
            <person name="Merkulov G."/>
            <person name="Milshina N.V."/>
            <person name="Mobarry C."/>
            <person name="Morris J."/>
            <person name="Moshrefi A."/>
            <person name="Mount S.M."/>
            <person name="Moy M."/>
            <person name="Murphy B."/>
            <person name="Murphy L."/>
            <person name="Muzny D.M."/>
            <person name="Nelson D.L."/>
            <person name="Nelson D.R."/>
            <person name="Nelson K.A."/>
            <person name="Nixon K."/>
            <person name="Nusskern D.R."/>
            <person name="Pacleb J.M."/>
            <person name="Palazzolo M."/>
            <person name="Pittman G.S."/>
            <person name="Pan S."/>
            <person name="Pollard J."/>
            <person name="Puri V."/>
            <person name="Reese M.G."/>
            <person name="Reinert K."/>
            <person name="Remington K."/>
            <person name="Saunders R.D.C."/>
            <person name="Scheeler F."/>
            <person name="Shen H."/>
            <person name="Shue B.C."/>
            <person name="Siden-Kiamos I."/>
            <person name="Simpson M."/>
            <person name="Skupski M.P."/>
            <person name="Smith T.J."/>
            <person name="Spier E."/>
            <person name="Spradling A.C."/>
            <person name="Stapleton M."/>
            <person name="Strong R."/>
            <person name="Sun E."/>
            <person name="Svirskas R."/>
            <person name="Tector C."/>
            <person name="Turner R."/>
            <person name="Venter E."/>
            <person name="Wang A.H."/>
            <person name="Wang X."/>
            <person name="Wang Z.-Y."/>
            <person name="Wassarman D.A."/>
            <person name="Weinstock G.M."/>
            <person name="Weissenbach J."/>
            <person name="Williams S.M."/>
            <person name="Woodage T."/>
            <person name="Worley K.C."/>
            <person name="Wu D."/>
            <person name="Yang S."/>
            <person name="Yao Q.A."/>
            <person name="Ye J."/>
            <person name="Yeh R.-F."/>
            <person name="Zaveri J.S."/>
            <person name="Zhan M."/>
            <person name="Zhang G."/>
            <person name="Zhao Q."/>
            <person name="Zheng L."/>
            <person name="Zheng X.H."/>
            <person name="Zhong F.N."/>
            <person name="Zhong W."/>
            <person name="Zhou X."/>
            <person name="Zhu S.C."/>
            <person name="Zhu X."/>
            <person name="Smith H.O."/>
            <person name="Gibbs R.A."/>
            <person name="Myers E.W."/>
            <person name="Rubin G.M."/>
            <person name="Venter J.C."/>
        </authorList>
    </citation>
    <scope>NUCLEOTIDE SEQUENCE [LARGE SCALE GENOMIC DNA]</scope>
    <source>
        <strain>Berkeley</strain>
    </source>
</reference>
<reference key="5">
    <citation type="journal article" date="2002" name="Genome Biol.">
        <title>Annotation of the Drosophila melanogaster euchromatic genome: a systematic review.</title>
        <authorList>
            <person name="Misra S."/>
            <person name="Crosby M.A."/>
            <person name="Mungall C.J."/>
            <person name="Matthews B.B."/>
            <person name="Campbell K.S."/>
            <person name="Hradecky P."/>
            <person name="Huang Y."/>
            <person name="Kaminker J.S."/>
            <person name="Millburn G.H."/>
            <person name="Prochnik S.E."/>
            <person name="Smith C.D."/>
            <person name="Tupy J.L."/>
            <person name="Whitfield E.J."/>
            <person name="Bayraktaroglu L."/>
            <person name="Berman B.P."/>
            <person name="Bettencourt B.R."/>
            <person name="Celniker S.E."/>
            <person name="de Grey A.D.N.J."/>
            <person name="Drysdale R.A."/>
            <person name="Harris N.L."/>
            <person name="Richter J."/>
            <person name="Russo S."/>
            <person name="Schroeder A.J."/>
            <person name="Shu S.Q."/>
            <person name="Stapleton M."/>
            <person name="Yamada C."/>
            <person name="Ashburner M."/>
            <person name="Gelbart W.M."/>
            <person name="Rubin G.M."/>
            <person name="Lewis S.E."/>
        </authorList>
    </citation>
    <scope>GENOME REANNOTATION</scope>
    <scope>ALTERNATIVE SPLICING</scope>
    <source>
        <strain>Berkeley</strain>
    </source>
</reference>
<reference key="6">
    <citation type="journal article" date="2002" name="Genome Biol.">
        <title>A Drosophila full-length cDNA resource.</title>
        <authorList>
            <person name="Stapleton M."/>
            <person name="Carlson J.W."/>
            <person name="Brokstein P."/>
            <person name="Yu C."/>
            <person name="Champe M."/>
            <person name="George R.A."/>
            <person name="Guarin H."/>
            <person name="Kronmiller B."/>
            <person name="Pacleb J.M."/>
            <person name="Park S."/>
            <person name="Wan K.H."/>
            <person name="Rubin G.M."/>
            <person name="Celniker S.E."/>
        </authorList>
    </citation>
    <scope>NUCLEOTIDE SEQUENCE [LARGE SCALE MRNA] (ISOFORM A)</scope>
    <source>
        <strain>Berkeley</strain>
        <tissue>Embryo</tissue>
    </source>
</reference>
<reference key="7">
    <citation type="journal article" date="1989" name="Nature">
        <title>Transcripts of one of two Drosophila cyclin genes become localized in pole cells during embryogenesis.</title>
        <authorList>
            <person name="Whitfield W.G.F."/>
            <person name="Gonzalez C."/>
            <person name="Sanchez-Herrero E."/>
            <person name="Glover D.M."/>
        </authorList>
    </citation>
    <scope>NUCLEOTIDE SEQUENCE [MRNA] OF 289-301 AND 343-355</scope>
</reference>
<reference key="8">
    <citation type="journal article" date="2007" name="Mol. Biosyst.">
        <title>An integrated chemical, mass spectrometric and computational strategy for (quantitative) phosphoproteomics: application to Drosophila melanogaster Kc167 cells.</title>
        <authorList>
            <person name="Bodenmiller B."/>
            <person name="Mueller L.N."/>
            <person name="Pedrioli P.G.A."/>
            <person name="Pflieger D."/>
            <person name="Juenger M.A."/>
            <person name="Eng J.K."/>
            <person name="Aebersold R."/>
            <person name="Tao W.A."/>
        </authorList>
    </citation>
    <scope>PHOSPHORYLATION [LARGE SCALE ANALYSIS] AT SER-137</scope>
    <scope>IDENTIFICATION BY MASS SPECTROMETRY</scope>
</reference>
<reference key="9">
    <citation type="journal article" date="2008" name="J. Proteome Res.">
        <title>Phosphoproteome analysis of Drosophila melanogaster embryos.</title>
        <authorList>
            <person name="Zhai B."/>
            <person name="Villen J."/>
            <person name="Beausoleil S.A."/>
            <person name="Mintseris J."/>
            <person name="Gygi S.P."/>
        </authorList>
    </citation>
    <scope>PHOSPHORYLATION [LARGE SCALE ANALYSIS] AT SER-137</scope>
    <scope>IDENTIFICATION BY MASS SPECTROMETRY</scope>
    <source>
        <tissue>Embryo</tissue>
    </source>
</reference>
<comment type="function">
    <text>Essential for the control of the cell cycle at the G2/M (mitosis) transition.</text>
</comment>
<comment type="subunit">
    <text>Interacts with the protein kinase Cdk1 to form a serine/threonine kinase holoenzyme complex also known as maturation promoting factor (MPF). The cyclin subunit imparts substrate specificity to the complex.</text>
</comment>
<comment type="alternative products">
    <event type="alternative splicing"/>
    <isoform>
        <id>P20439-1</id>
        <name>A</name>
        <name>D</name>
        <sequence type="displayed"/>
    </isoform>
    <isoform>
        <id>P20439-2</id>
        <name>B</name>
        <sequence type="described" ref="VSP_021569"/>
    </isoform>
    <isoform>
        <id>P20439-3</id>
        <name>C</name>
        <sequence type="described" ref="VSP_021570"/>
    </isoform>
</comment>
<comment type="developmental stage">
    <text>Accumulates steadily during G2 and is abruptly destroyed at mitosis.</text>
</comment>
<comment type="similarity">
    <text evidence="4">Belongs to the cyclin family. Cyclin AB subfamily.</text>
</comment>
<organism>
    <name type="scientific">Drosophila melanogaster</name>
    <name type="common">Fruit fly</name>
    <dbReference type="NCBI Taxonomy" id="7227"/>
    <lineage>
        <taxon>Eukaryota</taxon>
        <taxon>Metazoa</taxon>
        <taxon>Ecdysozoa</taxon>
        <taxon>Arthropoda</taxon>
        <taxon>Hexapoda</taxon>
        <taxon>Insecta</taxon>
        <taxon>Pterygota</taxon>
        <taxon>Neoptera</taxon>
        <taxon>Endopterygota</taxon>
        <taxon>Diptera</taxon>
        <taxon>Brachycera</taxon>
        <taxon>Muscomorpha</taxon>
        <taxon>Ephydroidea</taxon>
        <taxon>Drosophilidae</taxon>
        <taxon>Drosophila</taxon>
        <taxon>Sophophora</taxon>
    </lineage>
</organism>
<sequence length="530" mass="59256">MVGTTLKMRGDENASENFKQVQLKKLTVPSMEATTKRAALGDLQNRGISRPIAAKDAAQKDSKDLKLTDALRNAKARVDSHWKKQPLGSTNGNGNGAVPPKVNEGGVSAFLRSNSVRNRVPTKTTVEPTKVTVKSSSSENVNEPTLKREDSNLSKKSLTKLRAALAKPVMGVSGIRREPVAVSRKEAETKKELPETKKDSLEVKKDATRMPLIRGNSAVTTTTSTMPTTMSLSSKRLAGIEDIDANDKENLVLVSEYVNDIYDYLYQVELEQPIHKDHLAGQKEVSHKMRAVLIDWINEVHLQFHLAAETFQLAVAIIDRYLQVVKDTKRTYLQLVGVTALFIATKYEELFPPAIGDFVFITDDTYTARQIRQMELQIFKAIDCNLSRPLPIHFLRRYSKAAGAEDEHHTMSKYFIELASVDYEMATYRPSEIAAASLFLSLHLLNGNHRAGTGFNDRHWTPTLTFYSRYSAAHLRPITRLIAKLARDAPQAKLKAIYNKYQGSKFQKIALRTELTGALMDSIVGQSQRK</sequence>